<comment type="function">
    <text evidence="1">Acts as a chaperone.</text>
</comment>
<comment type="induction">
    <text evidence="1">By stress conditions e.g. heat shock.</text>
</comment>
<comment type="similarity">
    <text evidence="1">Belongs to the heat shock protein 70 family.</text>
</comment>
<feature type="chain" id="PRO_1000205184" description="Chaperone protein DnaK">
    <location>
        <begin position="1"/>
        <end position="637"/>
    </location>
</feature>
<feature type="region of interest" description="Disordered" evidence="2">
    <location>
        <begin position="597"/>
        <end position="637"/>
    </location>
</feature>
<feature type="compositionally biased region" description="Polar residues" evidence="2">
    <location>
        <begin position="600"/>
        <end position="610"/>
    </location>
</feature>
<feature type="compositionally biased region" description="Acidic residues" evidence="2">
    <location>
        <begin position="620"/>
        <end position="629"/>
    </location>
</feature>
<feature type="modified residue" description="Phosphothreonine; by autocatalysis" evidence="1">
    <location>
        <position position="198"/>
    </location>
</feature>
<proteinExistence type="inferred from homology"/>
<organism>
    <name type="scientific">Desulforapulum autotrophicum (strain ATCC 43914 / DSM 3382 / VKM B-1955 / HRM2)</name>
    <name type="common">Desulfobacterium autotrophicum</name>
    <dbReference type="NCBI Taxonomy" id="177437"/>
    <lineage>
        <taxon>Bacteria</taxon>
        <taxon>Pseudomonadati</taxon>
        <taxon>Thermodesulfobacteriota</taxon>
        <taxon>Desulfobacteria</taxon>
        <taxon>Desulfobacterales</taxon>
        <taxon>Desulfobacteraceae</taxon>
        <taxon>Desulforapulum</taxon>
    </lineage>
</organism>
<accession>C0QGP6</accession>
<evidence type="ECO:0000255" key="1">
    <source>
        <dbReference type="HAMAP-Rule" id="MF_00332"/>
    </source>
</evidence>
<evidence type="ECO:0000256" key="2">
    <source>
        <dbReference type="SAM" id="MobiDB-lite"/>
    </source>
</evidence>
<reference key="1">
    <citation type="journal article" date="2009" name="Environ. Microbiol.">
        <title>Genome sequence of Desulfobacterium autotrophicum HRM2, a marine sulfate reducer oxidizing organic carbon completely to carbon dioxide.</title>
        <authorList>
            <person name="Strittmatter A.W."/>
            <person name="Liesegang H."/>
            <person name="Rabus R."/>
            <person name="Decker I."/>
            <person name="Amann J."/>
            <person name="Andres S."/>
            <person name="Henne A."/>
            <person name="Fricke W.F."/>
            <person name="Martinez-Arias R."/>
            <person name="Bartels D."/>
            <person name="Goesmann A."/>
            <person name="Krause L."/>
            <person name="Puehler A."/>
            <person name="Klenk H.P."/>
            <person name="Richter M."/>
            <person name="Schuler M."/>
            <person name="Gloeckner F.O."/>
            <person name="Meyerdierks A."/>
            <person name="Gottschalk G."/>
            <person name="Amann R."/>
        </authorList>
    </citation>
    <scope>NUCLEOTIDE SEQUENCE [LARGE SCALE GENOMIC DNA]</scope>
    <source>
        <strain>ATCC 43914 / DSM 3382 / VKM B-1955 / HRM2</strain>
    </source>
</reference>
<sequence>MGKIIGIDLGTTNSCVAVMEAGEPKVITNSEGNRTTPSVVALTEGGDRLVGQTAKRQAITNPENTVFGVKRLIGRKFDSPQIQGDKKVLPYKIEASANGDTRINLRGKQHSPAEISSFILANIKKTAEDYLGEEVTEAVITVPAYFNDSQRQATKDAGKIAGLTVKRIINEPTAASLAYGLDKKGEEKIVVFDLGGGTFDVSVLEIGDGVFEVKSTNGDTHLGGEDFDLRIIDYIADEFKKSQGIDIRGDKMALQRLKEAAEKAKMELSSAVETDINLPFITADASGPKHLDVKLTRAKLESLVADLLDNLVAPCKTALKDAGLTSSDINEVVLVGGMTRMPAVQERVEKIFSKKPHKGVNPDEVVAMGAAIQAGVLQGDVHDVLLLDVTPLSLGIETLGGVMTKLIDKNTTIPTKKSQVFSTAADSQPAVSIHVLQGEREMAAGNKTLGQFELTDLPPAPRGVPQIEVTFDIDANGIVHVAAKDKATGKEQSIRITAASGLSEEEIKKMVNDAELHADEDKKKHELVDAKNTAESLIHQTEKTLKEHGDKVDAATKTAIEAACEELKKVKEGTDAAIIKEKSEALTQASHKLAEAMYQQAAQESGQTEGAAQDPKGAAQDDDVVDADFEEVKDHKK</sequence>
<protein>
    <recommendedName>
        <fullName evidence="1">Chaperone protein DnaK</fullName>
    </recommendedName>
    <alternativeName>
        <fullName evidence="1">HSP70</fullName>
    </alternativeName>
    <alternativeName>
        <fullName evidence="1">Heat shock 70 kDa protein</fullName>
    </alternativeName>
    <alternativeName>
        <fullName evidence="1">Heat shock protein 70</fullName>
    </alternativeName>
</protein>
<name>DNAK_DESAH</name>
<dbReference type="EMBL" id="CP001087">
    <property type="protein sequence ID" value="ACN13521.1"/>
    <property type="molecule type" value="Genomic_DNA"/>
</dbReference>
<dbReference type="RefSeq" id="WP_012662770.1">
    <property type="nucleotide sequence ID" value="NC_012108.1"/>
</dbReference>
<dbReference type="SMR" id="C0QGP6"/>
<dbReference type="STRING" id="177437.HRM2_04030"/>
<dbReference type="KEGG" id="dat:HRM2_04030"/>
<dbReference type="eggNOG" id="COG0443">
    <property type="taxonomic scope" value="Bacteria"/>
</dbReference>
<dbReference type="HOGENOM" id="CLU_005965_2_1_7"/>
<dbReference type="OrthoDB" id="9766019at2"/>
<dbReference type="Proteomes" id="UP000000442">
    <property type="component" value="Chromosome"/>
</dbReference>
<dbReference type="GO" id="GO:0005524">
    <property type="term" value="F:ATP binding"/>
    <property type="evidence" value="ECO:0007669"/>
    <property type="project" value="UniProtKB-UniRule"/>
</dbReference>
<dbReference type="GO" id="GO:0140662">
    <property type="term" value="F:ATP-dependent protein folding chaperone"/>
    <property type="evidence" value="ECO:0007669"/>
    <property type="project" value="InterPro"/>
</dbReference>
<dbReference type="GO" id="GO:0051082">
    <property type="term" value="F:unfolded protein binding"/>
    <property type="evidence" value="ECO:0007669"/>
    <property type="project" value="InterPro"/>
</dbReference>
<dbReference type="CDD" id="cd10234">
    <property type="entry name" value="ASKHA_NBD_HSP70_DnaK-like"/>
    <property type="match status" value="1"/>
</dbReference>
<dbReference type="FunFam" id="2.60.34.10:FF:000014">
    <property type="entry name" value="Chaperone protein DnaK HSP70"/>
    <property type="match status" value="1"/>
</dbReference>
<dbReference type="FunFam" id="3.30.30.30:FF:000005">
    <property type="entry name" value="Heat shock protein ssb1"/>
    <property type="match status" value="1"/>
</dbReference>
<dbReference type="FunFam" id="1.20.1270.10:FF:000001">
    <property type="entry name" value="Molecular chaperone DnaK"/>
    <property type="match status" value="1"/>
</dbReference>
<dbReference type="FunFam" id="3.30.420.40:FF:000004">
    <property type="entry name" value="Molecular chaperone DnaK"/>
    <property type="match status" value="1"/>
</dbReference>
<dbReference type="FunFam" id="3.90.640.10:FF:000003">
    <property type="entry name" value="Molecular chaperone DnaK"/>
    <property type="match status" value="1"/>
</dbReference>
<dbReference type="Gene3D" id="1.20.1270.10">
    <property type="match status" value="1"/>
</dbReference>
<dbReference type="Gene3D" id="3.30.420.40">
    <property type="match status" value="2"/>
</dbReference>
<dbReference type="Gene3D" id="3.90.640.10">
    <property type="entry name" value="Actin, Chain A, domain 4"/>
    <property type="match status" value="1"/>
</dbReference>
<dbReference type="Gene3D" id="2.60.34.10">
    <property type="entry name" value="Substrate Binding Domain Of DNAk, Chain A, domain 1"/>
    <property type="match status" value="1"/>
</dbReference>
<dbReference type="HAMAP" id="MF_00332">
    <property type="entry name" value="DnaK"/>
    <property type="match status" value="1"/>
</dbReference>
<dbReference type="InterPro" id="IPR043129">
    <property type="entry name" value="ATPase_NBD"/>
</dbReference>
<dbReference type="InterPro" id="IPR012725">
    <property type="entry name" value="Chaperone_DnaK"/>
</dbReference>
<dbReference type="InterPro" id="IPR018181">
    <property type="entry name" value="Heat_shock_70_CS"/>
</dbReference>
<dbReference type="InterPro" id="IPR029048">
    <property type="entry name" value="HSP70_C_sf"/>
</dbReference>
<dbReference type="InterPro" id="IPR029047">
    <property type="entry name" value="HSP70_peptide-bd_sf"/>
</dbReference>
<dbReference type="InterPro" id="IPR013126">
    <property type="entry name" value="Hsp_70_fam"/>
</dbReference>
<dbReference type="NCBIfam" id="NF001413">
    <property type="entry name" value="PRK00290.1"/>
    <property type="match status" value="1"/>
</dbReference>
<dbReference type="NCBIfam" id="NF003520">
    <property type="entry name" value="PRK05183.1"/>
    <property type="match status" value="1"/>
</dbReference>
<dbReference type="NCBIfam" id="TIGR02350">
    <property type="entry name" value="prok_dnaK"/>
    <property type="match status" value="1"/>
</dbReference>
<dbReference type="PANTHER" id="PTHR19375">
    <property type="entry name" value="HEAT SHOCK PROTEIN 70KDA"/>
    <property type="match status" value="1"/>
</dbReference>
<dbReference type="Pfam" id="PF00012">
    <property type="entry name" value="HSP70"/>
    <property type="match status" value="1"/>
</dbReference>
<dbReference type="PRINTS" id="PR00301">
    <property type="entry name" value="HEATSHOCK70"/>
</dbReference>
<dbReference type="SUPFAM" id="SSF53067">
    <property type="entry name" value="Actin-like ATPase domain"/>
    <property type="match status" value="2"/>
</dbReference>
<dbReference type="SUPFAM" id="SSF100934">
    <property type="entry name" value="Heat shock protein 70kD (HSP70), C-terminal subdomain"/>
    <property type="match status" value="1"/>
</dbReference>
<dbReference type="SUPFAM" id="SSF100920">
    <property type="entry name" value="Heat shock protein 70kD (HSP70), peptide-binding domain"/>
    <property type="match status" value="1"/>
</dbReference>
<dbReference type="PROSITE" id="PS00297">
    <property type="entry name" value="HSP70_1"/>
    <property type="match status" value="1"/>
</dbReference>
<dbReference type="PROSITE" id="PS00329">
    <property type="entry name" value="HSP70_2"/>
    <property type="match status" value="1"/>
</dbReference>
<dbReference type="PROSITE" id="PS01036">
    <property type="entry name" value="HSP70_3"/>
    <property type="match status" value="1"/>
</dbReference>
<gene>
    <name evidence="1" type="primary">dnaK</name>
    <name type="ordered locus">HRM2_04030</name>
</gene>
<keyword id="KW-0067">ATP-binding</keyword>
<keyword id="KW-0143">Chaperone</keyword>
<keyword id="KW-0547">Nucleotide-binding</keyword>
<keyword id="KW-0597">Phosphoprotein</keyword>
<keyword id="KW-1185">Reference proteome</keyword>
<keyword id="KW-0346">Stress response</keyword>